<keyword id="KW-1185">Reference proteome</keyword>
<keyword id="KW-0687">Ribonucleoprotein</keyword>
<keyword id="KW-0689">Ribosomal protein</keyword>
<accession>C3PKR0</accession>
<comment type="similarity">
    <text evidence="1">Belongs to the universal ribosomal protein uL29 family.</text>
</comment>
<proteinExistence type="inferred from homology"/>
<gene>
    <name evidence="1" type="primary">rpmC</name>
    <name type="ordered locus">cauri_0397</name>
</gene>
<evidence type="ECO:0000255" key="1">
    <source>
        <dbReference type="HAMAP-Rule" id="MF_00374"/>
    </source>
</evidence>
<evidence type="ECO:0000305" key="2"/>
<organism>
    <name type="scientific">Corynebacterium aurimucosum (strain ATCC 700975 / DSM 44827 / CIP 107346 / CN-1)</name>
    <name type="common">Corynebacterium nigricans</name>
    <dbReference type="NCBI Taxonomy" id="548476"/>
    <lineage>
        <taxon>Bacteria</taxon>
        <taxon>Bacillati</taxon>
        <taxon>Actinomycetota</taxon>
        <taxon>Actinomycetes</taxon>
        <taxon>Mycobacteriales</taxon>
        <taxon>Corynebacteriaceae</taxon>
        <taxon>Corynebacterium</taxon>
    </lineage>
</organism>
<name>RL29_CORA7</name>
<sequence length="76" mass="8612">MATGTPAHEFRELDNAELENRLKDAKEELFNLRFQKATGQLTNNRRIGTVKRDIARIYTVLRERELGLSVAPGAEA</sequence>
<feature type="chain" id="PRO_1000194009" description="Large ribosomal subunit protein uL29">
    <location>
        <begin position="1"/>
        <end position="76"/>
    </location>
</feature>
<dbReference type="EMBL" id="CP001601">
    <property type="protein sequence ID" value="ACP31996.1"/>
    <property type="molecule type" value="Genomic_DNA"/>
</dbReference>
<dbReference type="RefSeq" id="WP_010189642.1">
    <property type="nucleotide sequence ID" value="NZ_ACLH01000066.1"/>
</dbReference>
<dbReference type="SMR" id="C3PKR0"/>
<dbReference type="STRING" id="548476.cauri_0397"/>
<dbReference type="GeneID" id="31923016"/>
<dbReference type="KEGG" id="car:cauri_0397"/>
<dbReference type="eggNOG" id="COG0255">
    <property type="taxonomic scope" value="Bacteria"/>
</dbReference>
<dbReference type="HOGENOM" id="CLU_158491_3_3_11"/>
<dbReference type="OrthoDB" id="9815192at2"/>
<dbReference type="Proteomes" id="UP000002077">
    <property type="component" value="Chromosome"/>
</dbReference>
<dbReference type="GO" id="GO:0022625">
    <property type="term" value="C:cytosolic large ribosomal subunit"/>
    <property type="evidence" value="ECO:0007669"/>
    <property type="project" value="TreeGrafter"/>
</dbReference>
<dbReference type="GO" id="GO:0003735">
    <property type="term" value="F:structural constituent of ribosome"/>
    <property type="evidence" value="ECO:0007669"/>
    <property type="project" value="InterPro"/>
</dbReference>
<dbReference type="GO" id="GO:0006412">
    <property type="term" value="P:translation"/>
    <property type="evidence" value="ECO:0007669"/>
    <property type="project" value="UniProtKB-UniRule"/>
</dbReference>
<dbReference type="CDD" id="cd00427">
    <property type="entry name" value="Ribosomal_L29_HIP"/>
    <property type="match status" value="1"/>
</dbReference>
<dbReference type="FunFam" id="1.10.287.310:FF:000001">
    <property type="entry name" value="50S ribosomal protein L29"/>
    <property type="match status" value="1"/>
</dbReference>
<dbReference type="Gene3D" id="1.10.287.310">
    <property type="match status" value="1"/>
</dbReference>
<dbReference type="HAMAP" id="MF_00374">
    <property type="entry name" value="Ribosomal_uL29"/>
    <property type="match status" value="1"/>
</dbReference>
<dbReference type="InterPro" id="IPR050063">
    <property type="entry name" value="Ribosomal_protein_uL29"/>
</dbReference>
<dbReference type="InterPro" id="IPR001854">
    <property type="entry name" value="Ribosomal_uL29"/>
</dbReference>
<dbReference type="InterPro" id="IPR018254">
    <property type="entry name" value="Ribosomal_uL29_CS"/>
</dbReference>
<dbReference type="InterPro" id="IPR036049">
    <property type="entry name" value="Ribosomal_uL29_sf"/>
</dbReference>
<dbReference type="NCBIfam" id="TIGR00012">
    <property type="entry name" value="L29"/>
    <property type="match status" value="1"/>
</dbReference>
<dbReference type="PANTHER" id="PTHR10916">
    <property type="entry name" value="60S RIBOSOMAL PROTEIN L35/50S RIBOSOMAL PROTEIN L29"/>
    <property type="match status" value="1"/>
</dbReference>
<dbReference type="PANTHER" id="PTHR10916:SF0">
    <property type="entry name" value="LARGE RIBOSOMAL SUBUNIT PROTEIN UL29C"/>
    <property type="match status" value="1"/>
</dbReference>
<dbReference type="Pfam" id="PF00831">
    <property type="entry name" value="Ribosomal_L29"/>
    <property type="match status" value="1"/>
</dbReference>
<dbReference type="SUPFAM" id="SSF46561">
    <property type="entry name" value="Ribosomal protein L29 (L29p)"/>
    <property type="match status" value="1"/>
</dbReference>
<dbReference type="PROSITE" id="PS00579">
    <property type="entry name" value="RIBOSOMAL_L29"/>
    <property type="match status" value="1"/>
</dbReference>
<reference key="1">
    <citation type="journal article" date="2010" name="BMC Genomics">
        <title>Complete genome sequence and lifestyle of black-pigmented Corynebacterium aurimucosum ATCC 700975 (formerly C. nigricans CN-1) isolated from a vaginal swab of a woman with spontaneous abortion.</title>
        <authorList>
            <person name="Trost E."/>
            <person name="Gotker S."/>
            <person name="Schneider J."/>
            <person name="Schneiker-Bekel S."/>
            <person name="Szczepanowski R."/>
            <person name="Tilker A."/>
            <person name="Viehoever P."/>
            <person name="Arnold W."/>
            <person name="Bekel T."/>
            <person name="Blom J."/>
            <person name="Gartemann K.H."/>
            <person name="Linke B."/>
            <person name="Goesmann A."/>
            <person name="Puhler A."/>
            <person name="Shukla S.K."/>
            <person name="Tauch A."/>
        </authorList>
    </citation>
    <scope>NUCLEOTIDE SEQUENCE [LARGE SCALE GENOMIC DNA]</scope>
    <source>
        <strain>ATCC 700975 / DSM 44827 / CIP 107346 / CN-1</strain>
    </source>
</reference>
<protein>
    <recommendedName>
        <fullName evidence="1">Large ribosomal subunit protein uL29</fullName>
    </recommendedName>
    <alternativeName>
        <fullName evidence="2">50S ribosomal protein L29</fullName>
    </alternativeName>
</protein>